<protein>
    <recommendedName>
        <fullName evidence="6">Large proline-rich protein bag6-A</fullName>
    </recommendedName>
    <alternativeName>
        <fullName evidence="1">BCL2-associated athanogene 6</fullName>
    </alternativeName>
    <alternativeName>
        <fullName evidence="7">HLA-B-associated transcript 3-A</fullName>
    </alternativeName>
    <alternativeName>
        <fullName evidence="5">Protein Scythe</fullName>
    </alternativeName>
</protein>
<reference key="1">
    <citation type="journal article" date="1998" name="EMBO J.">
        <title>Scythe: a novel reaper-binding apoptotic regulator.</title>
        <authorList>
            <person name="Thress K."/>
            <person name="Henzel W."/>
            <person name="Shillinglaw W."/>
            <person name="Kornbluth S."/>
        </authorList>
    </citation>
    <scope>NUCLEOTIDE SEQUENCE [MRNA]</scope>
    <scope>FUNCTION</scope>
</reference>
<feature type="chain" id="PRO_0000403753" description="Large proline-rich protein bag6-A">
    <location>
        <begin position="1"/>
        <end position="1135"/>
    </location>
</feature>
<feature type="domain" description="Ubiquitin-like" evidence="2">
    <location>
        <begin position="7"/>
        <end position="82"/>
    </location>
</feature>
<feature type="region of interest" description="Disordered" evidence="3">
    <location>
        <begin position="76"/>
        <end position="114"/>
    </location>
</feature>
<feature type="region of interest" description="Disordered" evidence="3">
    <location>
        <begin position="194"/>
        <end position="238"/>
    </location>
</feature>
<feature type="region of interest" description="Disordered" evidence="3">
    <location>
        <begin position="350"/>
        <end position="407"/>
    </location>
</feature>
<feature type="region of interest" description="Disordered" evidence="3">
    <location>
        <begin position="498"/>
        <end position="522"/>
    </location>
</feature>
<feature type="region of interest" description="Disordered" evidence="3">
    <location>
        <begin position="552"/>
        <end position="612"/>
    </location>
</feature>
<feature type="region of interest" description="Disordered" evidence="3">
    <location>
        <begin position="661"/>
        <end position="698"/>
    </location>
</feature>
<feature type="region of interest" description="Disordered" evidence="3">
    <location>
        <begin position="1075"/>
        <end position="1099"/>
    </location>
</feature>
<feature type="region of interest" description="Disordered" evidence="3">
    <location>
        <begin position="1116"/>
        <end position="1135"/>
    </location>
</feature>
<feature type="compositionally biased region" description="Low complexity" evidence="3">
    <location>
        <begin position="79"/>
        <end position="100"/>
    </location>
</feature>
<feature type="compositionally biased region" description="Polar residues" evidence="3">
    <location>
        <begin position="212"/>
        <end position="227"/>
    </location>
</feature>
<feature type="compositionally biased region" description="Low complexity" evidence="3">
    <location>
        <begin position="228"/>
        <end position="237"/>
    </location>
</feature>
<feature type="compositionally biased region" description="Polar residues" evidence="3">
    <location>
        <begin position="367"/>
        <end position="387"/>
    </location>
</feature>
<feature type="compositionally biased region" description="Low complexity" evidence="3">
    <location>
        <begin position="555"/>
        <end position="600"/>
    </location>
</feature>
<feature type="compositionally biased region" description="Low complexity" evidence="3">
    <location>
        <begin position="663"/>
        <end position="672"/>
    </location>
</feature>
<feature type="compositionally biased region" description="Pro residues" evidence="3">
    <location>
        <begin position="673"/>
        <end position="692"/>
    </location>
</feature>
<feature type="compositionally biased region" description="Basic and acidic residues" evidence="3">
    <location>
        <begin position="1087"/>
        <end position="1099"/>
    </location>
</feature>
<feature type="compositionally biased region" description="Polar residues" evidence="3">
    <location>
        <begin position="1116"/>
        <end position="1129"/>
    </location>
</feature>
<sequence>MAANEKMEVTVKTLDSQTRTFTVETEISVKDFKAHISSDVGISPEKQRLIYQGRVLQEDKKLKEYNVDGKVIHLVERAPPQTQPSTGGPSTSSSTSPTSSNAAPVPGAPERNGNSYVMVGTFNLPHVMSGLVRQQRPSVSTVNGNDGSTLDVHINLDQQLPVQSEPRVRLVLAQHILQDIQRILDRLEGQAVNEQAAEPMDTAESEGEASSRETLPQTTQNTDGQSNTTPTSHPSPSEYVEVLQSLSRVEERLAPFMQRYREILSSATSDAYENQEEREQSQRIINLVGESLRLLGNALVAVSDLRCNLSSASPRHLHVVRPMSHYSGPMLLQQAAIPIQINVGTTVTATGNGTHAGHMPSDGNAAQPPSTNTSEPQRPNTENQPPSNGERPASDAPPTSVPHPHPRVIRITHQTVEPVMMMHMNIQDSASGGPTTIPPPTAGHGGSAHIHMPGLPPEFMQAISHQITQQAMAAASGQQIPGFQAPPRFVFTRPAAPSFQFQPGTATTPPGPGGATTTVPGATVGPAGNASLAQMISGLVGQLLMHPVVVAQGGSSTSSSTSSSTFTSTSSSASSSSSTDTTSTTTTSSTANPTVSSVPSSQPPPGTDQHLSQLLGSLLGTASSGMSNITMGSPSITVTVPGMPAFLQGVTDILQATQTVPVSTAPTQSASQAPPPSSPPPPPAHSSPPPAAAPESLPPEFFTSVVQGVLSSMLGSLSAADQSGTESIAAFIQRLSGTHNIFQPDAEGPGGFFGDLLTLICHNFSLVDMVMLLHGHSQPLQNLQPQLRSFFLQEYLHQVDPTPNNIQMASRNLTNGLEEYIRESFASVTVRDDVDITRTNIEFLQDQFNRITTHILHCADSTFGQRLLEMCNQSLFEWLALNLYCLRGDQNALTSVINERIRRLSLDVSPVLVSWVTSVLSLRLQVLLGQMPVTEGEIQRHVRRVGDAPQVPEPSSQEQPMETMPVDCQNGAASPVLATHSGGVLFLPPQSSVPTICPDSDHPTQEDGGSEQWAASVPPEWVPVIRQDMQNQRKIKQQPPLSDAYLSGMPAKRRKTMQGEGPHLSLSEAVSRAMKATGAKPESSAECVRRELDNSEAQGRYREQLCQDIQKTLQDNESYSAQRFPNTQRAFRGDP</sequence>
<organism>
    <name type="scientific">Xenopus laevis</name>
    <name type="common">African clawed frog</name>
    <dbReference type="NCBI Taxonomy" id="8355"/>
    <lineage>
        <taxon>Eukaryota</taxon>
        <taxon>Metazoa</taxon>
        <taxon>Chordata</taxon>
        <taxon>Craniata</taxon>
        <taxon>Vertebrata</taxon>
        <taxon>Euteleostomi</taxon>
        <taxon>Amphibia</taxon>
        <taxon>Batrachia</taxon>
        <taxon>Anura</taxon>
        <taxon>Pipoidea</taxon>
        <taxon>Pipidae</taxon>
        <taxon>Xenopodinae</taxon>
        <taxon>Xenopus</taxon>
        <taxon>Xenopus</taxon>
    </lineage>
</organism>
<evidence type="ECO:0000250" key="1">
    <source>
        <dbReference type="UniProtKB" id="P46379"/>
    </source>
</evidence>
<evidence type="ECO:0000255" key="2">
    <source>
        <dbReference type="PROSITE-ProRule" id="PRU00214"/>
    </source>
</evidence>
<evidence type="ECO:0000256" key="3">
    <source>
        <dbReference type="SAM" id="MobiDB-lite"/>
    </source>
</evidence>
<evidence type="ECO:0000269" key="4">
    <source>
    </source>
</evidence>
<evidence type="ECO:0000303" key="5">
    <source>
    </source>
</evidence>
<evidence type="ECO:0000305" key="6"/>
<evidence type="ECO:0000305" key="7">
    <source>
    </source>
</evidence>
<keyword id="KW-0053">Apoptosis</keyword>
<keyword id="KW-0143">Chaperone</keyword>
<keyword id="KW-0156">Chromatin regulator</keyword>
<keyword id="KW-0963">Cytoplasm</keyword>
<keyword id="KW-0539">Nucleus</keyword>
<keyword id="KW-1185">Reference proteome</keyword>
<keyword id="KW-0964">Secreted</keyword>
<keyword id="KW-0813">Transport</keyword>
<comment type="function">
    <text evidence="1 4">ATP-independent molecular chaperone preventing the aggregation of misfolded and hydrophobic patches-containing proteins. Functions as part of a cytosolic protein quality control complex, the bag6/bat3 complex, which maintains these client proteins in a soluble state and participates in their proper delivery to the endoplasmic reticulum or alternatively can promote their sorting to the proteasome where they undergo degradation. The bag6/bat3 complex is involved in the post-translational delivery of tail-anchored/type II transmembrane proteins to the endoplasmic reticulum membrane. Similarly, the bag6/bat3 complex also functions as a sorting platform for proteins of the secretory pathway that are mislocalized to the cytosol either delivering them to the proteasome for degradation or to the endoplasmic reticulum. The bag6/bat3 complex also plays a role in the endoplasmic reticulum-associated degradation (ERAD), a quality control mechanism that eliminates unwanted proteins of the endoplasmic reticulum through their retrotranslocation to the cytosol and their targeting to the proteasome. It maintains these retrotranslocated proteins in an unfolded yet soluble state condition in the cytosol to ensure their proper delivery to the proteasome. Also required for selective ubiquitin-mediated degradation of defective nascent chain polypeptides by the proteasome. Also involved in endoplasmic reticulum stress-induced pre-emptive quality control, a mechanism that selectively attenuates the translocation of newly synthesized proteins into the endoplasmic reticulum and reroutes them to the cytosol for proteasomal degradation. May ensure the proper degradation of these proteins and thereby protects the endoplasmic reticulum from protein overload upon stress (By similarity). By stabilizing a large spectrum of proteins, may indirectly affect different biological processes including apoptosis (PubMed:9799223). By controlling the steady-state expression of the IGF1R receptor, indirectly regulates the insulin-like growth factor receptor signaling pathway (By similarity).</text>
</comment>
<comment type="function">
    <text evidence="1">When nuclear, may also act as a component of some chromatin regulator complex.</text>
</comment>
<comment type="subunit">
    <text evidence="1">Component of the bag6/bat3 complex.</text>
</comment>
<comment type="subcellular location">
    <subcellularLocation>
        <location evidence="1">Cytoplasm</location>
        <location evidence="1">Cytosol</location>
    </subcellularLocation>
    <subcellularLocation>
        <location evidence="1">Nucleus</location>
    </subcellularLocation>
    <subcellularLocation>
        <location evidence="1">Secreted</location>
        <location evidence="1">Extracellular exosome</location>
    </subcellularLocation>
</comment>
<dbReference type="EMBL" id="AF098511">
    <property type="protein sequence ID" value="AAC83822.1"/>
    <property type="molecule type" value="mRNA"/>
</dbReference>
<dbReference type="PIR" id="T30561">
    <property type="entry name" value="T30561"/>
</dbReference>
<dbReference type="RefSeq" id="NP_001080008.1">
    <property type="nucleotide sequence ID" value="NM_001086539.1"/>
</dbReference>
<dbReference type="SMR" id="Q9YHD3"/>
<dbReference type="BioGRID" id="97941">
    <property type="interactions" value="4"/>
</dbReference>
<dbReference type="DNASU" id="379698"/>
<dbReference type="GeneID" id="379698"/>
<dbReference type="KEGG" id="xla:379698"/>
<dbReference type="AGR" id="Xenbase:XB-GENE-6255172"/>
<dbReference type="CTD" id="379698"/>
<dbReference type="Xenbase" id="XB-GENE-6255172">
    <property type="gene designation" value="bag6.L"/>
</dbReference>
<dbReference type="OrthoDB" id="1885901at2759"/>
<dbReference type="Proteomes" id="UP000186698">
    <property type="component" value="Chromosome 8L"/>
</dbReference>
<dbReference type="Bgee" id="379698">
    <property type="expression patterns" value="Expressed in pancreas and 19 other cell types or tissues"/>
</dbReference>
<dbReference type="GO" id="GO:0071818">
    <property type="term" value="C:BAT3 complex"/>
    <property type="evidence" value="ECO:0000250"/>
    <property type="project" value="UniProtKB"/>
</dbReference>
<dbReference type="GO" id="GO:0005829">
    <property type="term" value="C:cytosol"/>
    <property type="evidence" value="ECO:0000250"/>
    <property type="project" value="UniProtKB"/>
</dbReference>
<dbReference type="GO" id="GO:0005576">
    <property type="term" value="C:extracellular region"/>
    <property type="evidence" value="ECO:0007669"/>
    <property type="project" value="UniProtKB-SubCell"/>
</dbReference>
<dbReference type="GO" id="GO:0005634">
    <property type="term" value="C:nucleus"/>
    <property type="evidence" value="ECO:0000250"/>
    <property type="project" value="UniProtKB"/>
</dbReference>
<dbReference type="GO" id="GO:0051787">
    <property type="term" value="F:misfolded protein binding"/>
    <property type="evidence" value="ECO:0000318"/>
    <property type="project" value="GO_Central"/>
</dbReference>
<dbReference type="GO" id="GO:0031593">
    <property type="term" value="F:polyubiquitin modification-dependent protein binding"/>
    <property type="evidence" value="ECO:0000250"/>
    <property type="project" value="UniProtKB"/>
</dbReference>
<dbReference type="GO" id="GO:0070628">
    <property type="term" value="F:proteasome binding"/>
    <property type="evidence" value="ECO:0000250"/>
    <property type="project" value="UniProtKB"/>
</dbReference>
<dbReference type="GO" id="GO:0043022">
    <property type="term" value="F:ribosome binding"/>
    <property type="evidence" value="ECO:0000250"/>
    <property type="project" value="UniProtKB"/>
</dbReference>
<dbReference type="GO" id="GO:0007420">
    <property type="term" value="P:brain development"/>
    <property type="evidence" value="ECO:0000250"/>
    <property type="project" value="UniProtKB"/>
</dbReference>
<dbReference type="GO" id="GO:0006325">
    <property type="term" value="P:chromatin organization"/>
    <property type="evidence" value="ECO:0007669"/>
    <property type="project" value="UniProtKB-KW"/>
</dbReference>
<dbReference type="GO" id="GO:0061857">
    <property type="term" value="P:endoplasmic reticulum stress-induced pre-emptive quality control"/>
    <property type="evidence" value="ECO:0000250"/>
    <property type="project" value="UniProtKB"/>
</dbReference>
<dbReference type="GO" id="GO:0036503">
    <property type="term" value="P:ERAD pathway"/>
    <property type="evidence" value="ECO:0000250"/>
    <property type="project" value="UniProtKB"/>
</dbReference>
<dbReference type="GO" id="GO:0018393">
    <property type="term" value="P:internal peptidyl-lysine acetylation"/>
    <property type="evidence" value="ECO:0000250"/>
    <property type="project" value="UniProtKB"/>
</dbReference>
<dbReference type="GO" id="GO:0042771">
    <property type="term" value="P:intrinsic apoptotic signaling pathway in response to DNA damage by p53 class mediator"/>
    <property type="evidence" value="ECO:0000250"/>
    <property type="project" value="UniProtKB"/>
</dbReference>
<dbReference type="GO" id="GO:0070059">
    <property type="term" value="P:intrinsic apoptotic signaling pathway in response to endoplasmic reticulum stress"/>
    <property type="evidence" value="ECO:0000250"/>
    <property type="project" value="UniProtKB"/>
</dbReference>
<dbReference type="GO" id="GO:0001822">
    <property type="term" value="P:kidney development"/>
    <property type="evidence" value="ECO:0000250"/>
    <property type="project" value="UniProtKB"/>
</dbReference>
<dbReference type="GO" id="GO:0030324">
    <property type="term" value="P:lung development"/>
    <property type="evidence" value="ECO:0000250"/>
    <property type="project" value="UniProtKB"/>
</dbReference>
<dbReference type="GO" id="GO:0032435">
    <property type="term" value="P:negative regulation of proteasomal ubiquitin-dependent protein catabolic process"/>
    <property type="evidence" value="ECO:0000250"/>
    <property type="project" value="UniProtKB"/>
</dbReference>
<dbReference type="GO" id="GO:0045861">
    <property type="term" value="P:negative regulation of proteolysis"/>
    <property type="evidence" value="ECO:0000250"/>
    <property type="project" value="UniProtKB"/>
</dbReference>
<dbReference type="GO" id="GO:0010498">
    <property type="term" value="P:proteasomal protein catabolic process"/>
    <property type="evidence" value="ECO:0000250"/>
    <property type="project" value="UniProtKB"/>
</dbReference>
<dbReference type="GO" id="GO:0050821">
    <property type="term" value="P:protein stabilization"/>
    <property type="evidence" value="ECO:0000250"/>
    <property type="project" value="UniProtKB"/>
</dbReference>
<dbReference type="GO" id="GO:0045995">
    <property type="term" value="P:regulation of embryonic development"/>
    <property type="evidence" value="ECO:0000250"/>
    <property type="project" value="UniProtKB"/>
</dbReference>
<dbReference type="GO" id="GO:0007283">
    <property type="term" value="P:spermatogenesis"/>
    <property type="evidence" value="ECO:0000250"/>
    <property type="project" value="UniProtKB"/>
</dbReference>
<dbReference type="GO" id="GO:0007130">
    <property type="term" value="P:synaptonemal complex assembly"/>
    <property type="evidence" value="ECO:0000250"/>
    <property type="project" value="UniProtKB"/>
</dbReference>
<dbReference type="GO" id="GO:0071816">
    <property type="term" value="P:tail-anchored membrane protein insertion into ER membrane"/>
    <property type="evidence" value="ECO:0000250"/>
    <property type="project" value="UniProtKB"/>
</dbReference>
<dbReference type="GO" id="GO:0006511">
    <property type="term" value="P:ubiquitin-dependent protein catabolic process"/>
    <property type="evidence" value="ECO:0000250"/>
    <property type="project" value="UniProtKB"/>
</dbReference>
<dbReference type="CDD" id="cd01809">
    <property type="entry name" value="Ubl_BAG6"/>
    <property type="match status" value="1"/>
</dbReference>
<dbReference type="FunFam" id="3.10.20.90:FF:000041">
    <property type="entry name" value="large proline-rich protein BAG6 isoform X1"/>
    <property type="match status" value="1"/>
</dbReference>
<dbReference type="Gene3D" id="3.10.20.90">
    <property type="entry name" value="Phosphatidylinositol 3-kinase Catalytic Subunit, Chain A, domain 1"/>
    <property type="match status" value="1"/>
</dbReference>
<dbReference type="InterPro" id="IPR021925">
    <property type="entry name" value="BAG6"/>
</dbReference>
<dbReference type="InterPro" id="IPR048926">
    <property type="entry name" value="Bag6_BAGS"/>
</dbReference>
<dbReference type="InterPro" id="IPR000626">
    <property type="entry name" value="Ubiquitin-like_dom"/>
</dbReference>
<dbReference type="InterPro" id="IPR029071">
    <property type="entry name" value="Ubiquitin-like_domsf"/>
</dbReference>
<dbReference type="PANTHER" id="PTHR15204">
    <property type="entry name" value="LARGE PROLINE-RICH PROTEIN BAG6"/>
    <property type="match status" value="1"/>
</dbReference>
<dbReference type="PANTHER" id="PTHR15204:SF0">
    <property type="entry name" value="LARGE PROLINE-RICH PROTEIN BAG6"/>
    <property type="match status" value="1"/>
</dbReference>
<dbReference type="Pfam" id="PF12057">
    <property type="entry name" value="BAG6"/>
    <property type="match status" value="1"/>
</dbReference>
<dbReference type="Pfam" id="PF20960">
    <property type="entry name" value="Bag6_BAGS"/>
    <property type="match status" value="1"/>
</dbReference>
<dbReference type="Pfam" id="PF00240">
    <property type="entry name" value="ubiquitin"/>
    <property type="match status" value="1"/>
</dbReference>
<dbReference type="SMART" id="SM00213">
    <property type="entry name" value="UBQ"/>
    <property type="match status" value="1"/>
</dbReference>
<dbReference type="SUPFAM" id="SSF54236">
    <property type="entry name" value="Ubiquitin-like"/>
    <property type="match status" value="1"/>
</dbReference>
<dbReference type="PROSITE" id="PS50053">
    <property type="entry name" value="UBIQUITIN_2"/>
    <property type="match status" value="1"/>
</dbReference>
<proteinExistence type="evidence at transcript level"/>
<gene>
    <name evidence="6" type="primary">Bag6-a</name>
    <name evidence="7" type="synonym">bat3-a</name>
</gene>
<accession>Q9YHD3</accession>
<name>BAG6A_XENLA</name>